<reference key="1">
    <citation type="submission" date="2006-08" db="EMBL/GenBank/DDBJ databases">
        <title>Complete sequence of Maricaulis maris MCS10.</title>
        <authorList>
            <consortium name="US DOE Joint Genome Institute"/>
            <person name="Copeland A."/>
            <person name="Lucas S."/>
            <person name="Lapidus A."/>
            <person name="Barry K."/>
            <person name="Detter J.C."/>
            <person name="Glavina del Rio T."/>
            <person name="Hammon N."/>
            <person name="Israni S."/>
            <person name="Dalin E."/>
            <person name="Tice H."/>
            <person name="Pitluck S."/>
            <person name="Saunders E."/>
            <person name="Brettin T."/>
            <person name="Bruce D."/>
            <person name="Han C."/>
            <person name="Tapia R."/>
            <person name="Gilna P."/>
            <person name="Schmutz J."/>
            <person name="Larimer F."/>
            <person name="Land M."/>
            <person name="Hauser L."/>
            <person name="Kyrpides N."/>
            <person name="Mikhailova N."/>
            <person name="Viollier P."/>
            <person name="Stephens C."/>
            <person name="Richardson P."/>
        </authorList>
    </citation>
    <scope>NUCLEOTIDE SEQUENCE [LARGE SCALE GENOMIC DNA]</scope>
    <source>
        <strain>MCS10</strain>
    </source>
</reference>
<name>RL32_MARMM</name>
<feature type="chain" id="PRO_0000296497" description="Large ribosomal subunit protein bL32">
    <location>
        <begin position="1"/>
        <end position="60"/>
    </location>
</feature>
<feature type="region of interest" description="Disordered" evidence="2">
    <location>
        <begin position="1"/>
        <end position="34"/>
    </location>
</feature>
<feature type="compositionally biased region" description="Basic residues" evidence="2">
    <location>
        <begin position="1"/>
        <end position="16"/>
    </location>
</feature>
<accession>Q0APT4</accession>
<evidence type="ECO:0000255" key="1">
    <source>
        <dbReference type="HAMAP-Rule" id="MF_00340"/>
    </source>
</evidence>
<evidence type="ECO:0000256" key="2">
    <source>
        <dbReference type="SAM" id="MobiDB-lite"/>
    </source>
</evidence>
<evidence type="ECO:0000305" key="3"/>
<sequence>MAVPKRKTTPSKRGMRRAHDALSSPVYIEDKDSGELRRPHHVDLKSGMYRGRQILEPKDD</sequence>
<dbReference type="EMBL" id="CP000449">
    <property type="protein sequence ID" value="ABI65703.1"/>
    <property type="molecule type" value="Genomic_DNA"/>
</dbReference>
<dbReference type="RefSeq" id="WP_011643350.1">
    <property type="nucleotide sequence ID" value="NC_008347.1"/>
</dbReference>
<dbReference type="SMR" id="Q0APT4"/>
<dbReference type="STRING" id="394221.Mmar10_1411"/>
<dbReference type="KEGG" id="mmr:Mmar10_1411"/>
<dbReference type="eggNOG" id="COG0333">
    <property type="taxonomic scope" value="Bacteria"/>
</dbReference>
<dbReference type="HOGENOM" id="CLU_129084_2_2_5"/>
<dbReference type="OrthoDB" id="9801927at2"/>
<dbReference type="Proteomes" id="UP000001964">
    <property type="component" value="Chromosome"/>
</dbReference>
<dbReference type="GO" id="GO:0015934">
    <property type="term" value="C:large ribosomal subunit"/>
    <property type="evidence" value="ECO:0007669"/>
    <property type="project" value="InterPro"/>
</dbReference>
<dbReference type="GO" id="GO:0003735">
    <property type="term" value="F:structural constituent of ribosome"/>
    <property type="evidence" value="ECO:0007669"/>
    <property type="project" value="InterPro"/>
</dbReference>
<dbReference type="GO" id="GO:0006412">
    <property type="term" value="P:translation"/>
    <property type="evidence" value="ECO:0007669"/>
    <property type="project" value="UniProtKB-UniRule"/>
</dbReference>
<dbReference type="Gene3D" id="1.20.5.640">
    <property type="entry name" value="Single helix bin"/>
    <property type="match status" value="1"/>
</dbReference>
<dbReference type="HAMAP" id="MF_00340">
    <property type="entry name" value="Ribosomal_bL32"/>
    <property type="match status" value="1"/>
</dbReference>
<dbReference type="InterPro" id="IPR002677">
    <property type="entry name" value="Ribosomal_bL32"/>
</dbReference>
<dbReference type="InterPro" id="IPR044957">
    <property type="entry name" value="Ribosomal_bL32_bact"/>
</dbReference>
<dbReference type="InterPro" id="IPR011332">
    <property type="entry name" value="Ribosomal_zn-bd"/>
</dbReference>
<dbReference type="NCBIfam" id="TIGR01031">
    <property type="entry name" value="rpmF_bact"/>
    <property type="match status" value="1"/>
</dbReference>
<dbReference type="PANTHER" id="PTHR35534">
    <property type="entry name" value="50S RIBOSOMAL PROTEIN L32"/>
    <property type="match status" value="1"/>
</dbReference>
<dbReference type="PANTHER" id="PTHR35534:SF1">
    <property type="entry name" value="LARGE RIBOSOMAL SUBUNIT PROTEIN BL32"/>
    <property type="match status" value="1"/>
</dbReference>
<dbReference type="Pfam" id="PF01783">
    <property type="entry name" value="Ribosomal_L32p"/>
    <property type="match status" value="1"/>
</dbReference>
<dbReference type="SUPFAM" id="SSF57829">
    <property type="entry name" value="Zn-binding ribosomal proteins"/>
    <property type="match status" value="1"/>
</dbReference>
<gene>
    <name evidence="1" type="primary">rpmF</name>
    <name type="ordered locus">Mmar10_1411</name>
</gene>
<comment type="similarity">
    <text evidence="1">Belongs to the bacterial ribosomal protein bL32 family.</text>
</comment>
<proteinExistence type="inferred from homology"/>
<organism>
    <name type="scientific">Maricaulis maris (strain MCS10)</name>
    <name type="common">Caulobacter maris</name>
    <dbReference type="NCBI Taxonomy" id="394221"/>
    <lineage>
        <taxon>Bacteria</taxon>
        <taxon>Pseudomonadati</taxon>
        <taxon>Pseudomonadota</taxon>
        <taxon>Alphaproteobacteria</taxon>
        <taxon>Maricaulales</taxon>
        <taxon>Maricaulaceae</taxon>
        <taxon>Maricaulis</taxon>
    </lineage>
</organism>
<keyword id="KW-1185">Reference proteome</keyword>
<keyword id="KW-0687">Ribonucleoprotein</keyword>
<keyword id="KW-0689">Ribosomal protein</keyword>
<protein>
    <recommendedName>
        <fullName evidence="1">Large ribosomal subunit protein bL32</fullName>
    </recommendedName>
    <alternativeName>
        <fullName evidence="3">50S ribosomal protein L32</fullName>
    </alternativeName>
</protein>